<reference key="1">
    <citation type="submission" date="2007-05" db="EMBL/GenBank/DDBJ databases">
        <title>Complete sequence of Pseudomonas putida F1.</title>
        <authorList>
            <consortium name="US DOE Joint Genome Institute"/>
            <person name="Copeland A."/>
            <person name="Lucas S."/>
            <person name="Lapidus A."/>
            <person name="Barry K."/>
            <person name="Detter J.C."/>
            <person name="Glavina del Rio T."/>
            <person name="Hammon N."/>
            <person name="Israni S."/>
            <person name="Dalin E."/>
            <person name="Tice H."/>
            <person name="Pitluck S."/>
            <person name="Chain P."/>
            <person name="Malfatti S."/>
            <person name="Shin M."/>
            <person name="Vergez L."/>
            <person name="Schmutz J."/>
            <person name="Larimer F."/>
            <person name="Land M."/>
            <person name="Hauser L."/>
            <person name="Kyrpides N."/>
            <person name="Lykidis A."/>
            <person name="Parales R."/>
            <person name="Richardson P."/>
        </authorList>
    </citation>
    <scope>NUCLEOTIDE SEQUENCE [LARGE SCALE GENOMIC DNA]</scope>
    <source>
        <strain>ATCC 700007 / DSM 6899 / JCM 31910 / BCRC 17059 / LMG 24140 / F1</strain>
    </source>
</reference>
<comment type="function">
    <text evidence="1">Acts as a processive, ATP-dependent zinc metallopeptidase for both cytoplasmic and membrane proteins. Plays a role in the quality control of integral membrane proteins.</text>
</comment>
<comment type="cofactor">
    <cofactor evidence="1">
        <name>Zn(2+)</name>
        <dbReference type="ChEBI" id="CHEBI:29105"/>
    </cofactor>
    <text evidence="1">Binds 1 zinc ion per subunit.</text>
</comment>
<comment type="subunit">
    <text evidence="1">Homohexamer.</text>
</comment>
<comment type="subcellular location">
    <subcellularLocation>
        <location evidence="1">Cell inner membrane</location>
        <topology evidence="1">Multi-pass membrane protein</topology>
        <orientation evidence="1">Cytoplasmic side</orientation>
    </subcellularLocation>
</comment>
<comment type="similarity">
    <text evidence="1">In the central section; belongs to the AAA ATPase family.</text>
</comment>
<comment type="similarity">
    <text evidence="1">In the C-terminal section; belongs to the peptidase M41 family.</text>
</comment>
<evidence type="ECO:0000255" key="1">
    <source>
        <dbReference type="HAMAP-Rule" id="MF_01458"/>
    </source>
</evidence>
<feature type="chain" id="PRO_5000252020" description="ATP-dependent zinc metalloprotease FtsH">
    <location>
        <begin position="1"/>
        <end position="615"/>
    </location>
</feature>
<feature type="topological domain" description="Cytoplasmic" evidence="1">
    <location>
        <begin position="1"/>
        <end position="8"/>
    </location>
</feature>
<feature type="transmembrane region" description="Helical" evidence="1">
    <location>
        <begin position="9"/>
        <end position="29"/>
    </location>
</feature>
<feature type="topological domain" description="Periplasmic" evidence="1">
    <location>
        <begin position="30"/>
        <end position="104"/>
    </location>
</feature>
<feature type="transmembrane region" description="Helical" evidence="1">
    <location>
        <begin position="105"/>
        <end position="125"/>
    </location>
</feature>
<feature type="topological domain" description="Cytoplasmic" evidence="1">
    <location>
        <begin position="126"/>
        <end position="615"/>
    </location>
</feature>
<feature type="active site" evidence="1">
    <location>
        <position position="421"/>
    </location>
</feature>
<feature type="binding site" evidence="1">
    <location>
        <begin position="198"/>
        <end position="205"/>
    </location>
    <ligand>
        <name>ATP</name>
        <dbReference type="ChEBI" id="CHEBI:30616"/>
    </ligand>
</feature>
<feature type="binding site" evidence="1">
    <location>
        <position position="420"/>
    </location>
    <ligand>
        <name>Zn(2+)</name>
        <dbReference type="ChEBI" id="CHEBI:29105"/>
        <note>catalytic</note>
    </ligand>
</feature>
<feature type="binding site" evidence="1">
    <location>
        <position position="424"/>
    </location>
    <ligand>
        <name>Zn(2+)</name>
        <dbReference type="ChEBI" id="CHEBI:29105"/>
        <note>catalytic</note>
    </ligand>
</feature>
<feature type="binding site" evidence="1">
    <location>
        <position position="497"/>
    </location>
    <ligand>
        <name>Zn(2+)</name>
        <dbReference type="ChEBI" id="CHEBI:29105"/>
        <note>catalytic</note>
    </ligand>
</feature>
<sequence length="615" mass="67049">MAMNKDKPWTLYLLAVGLAVLAAVQFGLFSQPAVQAIPYSQFLQLLDQQKVSDLHIEHERILGRLQEPIDGHSVFSTVRVDPALSEQLGRSGVAFSGVVEDNTVATVMGALMPLLMLLALWYFLFHGLGQKQGLGGLMGVGKSRARVYVEHDTQVTFADVAGIDDVKGELTEIVSFLKNKAWYARLGAHVPKGTLLVGPPGTGKTLVAKAIAGEAAVPFFSISGSEFVEMFVGVGAARVRDLFDQARQAAPCIIFIDELDALGKMRGVGSFGGNDEKEQTLNQLLAELDGFDPREGVVLLAATNRPEVLDPALLRAGRFDRQILIDRPDRKGRLAILKVHLHKIIYKNDLDCERIAEITPGLTGADLANLVNEAAIVATRRSSQWVELQDFTAAVERLVAGIERKGSVLRSDERQVVAYHEMGHALAASSLPAMDPVHKVSIIPRAAGSLGYTLQRPTDDRYLISTQMLRDRLVVLMAGRAAEHLVFGQVSTGAADDLGRATDIARQLVTRFGMSPVLGQAVLERQQAGYLGDSLLRQERKDYSEQTAREIDLAVRGLLEEAYGRARALLEQRRDDLDAGARLLLAKETITPEEFPALQPQANEPATYVLVDATK</sequence>
<name>FTSH_PSEP1</name>
<dbReference type="EC" id="3.4.24.-" evidence="1"/>
<dbReference type="EMBL" id="CP000712">
    <property type="protein sequence ID" value="ABQ78592.1"/>
    <property type="molecule type" value="Genomic_DNA"/>
</dbReference>
<dbReference type="SMR" id="A5W382"/>
<dbReference type="KEGG" id="ppf:Pput_2457"/>
<dbReference type="eggNOG" id="COG0465">
    <property type="taxonomic scope" value="Bacteria"/>
</dbReference>
<dbReference type="HOGENOM" id="CLU_000688_16_2_6"/>
<dbReference type="GO" id="GO:0005886">
    <property type="term" value="C:plasma membrane"/>
    <property type="evidence" value="ECO:0007669"/>
    <property type="project" value="UniProtKB-SubCell"/>
</dbReference>
<dbReference type="GO" id="GO:0005524">
    <property type="term" value="F:ATP binding"/>
    <property type="evidence" value="ECO:0007669"/>
    <property type="project" value="UniProtKB-UniRule"/>
</dbReference>
<dbReference type="GO" id="GO:0016887">
    <property type="term" value="F:ATP hydrolysis activity"/>
    <property type="evidence" value="ECO:0007669"/>
    <property type="project" value="UniProtKB-UniRule"/>
</dbReference>
<dbReference type="GO" id="GO:0004176">
    <property type="term" value="F:ATP-dependent peptidase activity"/>
    <property type="evidence" value="ECO:0007669"/>
    <property type="project" value="InterPro"/>
</dbReference>
<dbReference type="GO" id="GO:0004222">
    <property type="term" value="F:metalloendopeptidase activity"/>
    <property type="evidence" value="ECO:0007669"/>
    <property type="project" value="InterPro"/>
</dbReference>
<dbReference type="GO" id="GO:0008270">
    <property type="term" value="F:zinc ion binding"/>
    <property type="evidence" value="ECO:0007669"/>
    <property type="project" value="UniProtKB-UniRule"/>
</dbReference>
<dbReference type="GO" id="GO:0030163">
    <property type="term" value="P:protein catabolic process"/>
    <property type="evidence" value="ECO:0007669"/>
    <property type="project" value="UniProtKB-UniRule"/>
</dbReference>
<dbReference type="GO" id="GO:0006508">
    <property type="term" value="P:proteolysis"/>
    <property type="evidence" value="ECO:0007669"/>
    <property type="project" value="UniProtKB-KW"/>
</dbReference>
<dbReference type="CDD" id="cd19501">
    <property type="entry name" value="RecA-like_FtsH"/>
    <property type="match status" value="1"/>
</dbReference>
<dbReference type="FunFam" id="1.10.8.60:FF:000001">
    <property type="entry name" value="ATP-dependent zinc metalloprotease FtsH"/>
    <property type="match status" value="1"/>
</dbReference>
<dbReference type="FunFam" id="1.20.58.760:FF:000001">
    <property type="entry name" value="ATP-dependent zinc metalloprotease FtsH"/>
    <property type="match status" value="1"/>
</dbReference>
<dbReference type="FunFam" id="3.40.50.300:FF:000001">
    <property type="entry name" value="ATP-dependent zinc metalloprotease FtsH"/>
    <property type="match status" value="1"/>
</dbReference>
<dbReference type="Gene3D" id="1.10.8.60">
    <property type="match status" value="1"/>
</dbReference>
<dbReference type="Gene3D" id="3.30.720.210">
    <property type="match status" value="1"/>
</dbReference>
<dbReference type="Gene3D" id="3.40.50.300">
    <property type="entry name" value="P-loop containing nucleotide triphosphate hydrolases"/>
    <property type="match status" value="1"/>
</dbReference>
<dbReference type="Gene3D" id="1.20.58.760">
    <property type="entry name" value="Peptidase M41"/>
    <property type="match status" value="1"/>
</dbReference>
<dbReference type="HAMAP" id="MF_01458">
    <property type="entry name" value="FtsH"/>
    <property type="match status" value="1"/>
</dbReference>
<dbReference type="InterPro" id="IPR003593">
    <property type="entry name" value="AAA+_ATPase"/>
</dbReference>
<dbReference type="InterPro" id="IPR041569">
    <property type="entry name" value="AAA_lid_3"/>
</dbReference>
<dbReference type="InterPro" id="IPR003959">
    <property type="entry name" value="ATPase_AAA_core"/>
</dbReference>
<dbReference type="InterPro" id="IPR003960">
    <property type="entry name" value="ATPase_AAA_CS"/>
</dbReference>
<dbReference type="InterPro" id="IPR005936">
    <property type="entry name" value="FtsH"/>
</dbReference>
<dbReference type="InterPro" id="IPR027417">
    <property type="entry name" value="P-loop_NTPase"/>
</dbReference>
<dbReference type="InterPro" id="IPR011546">
    <property type="entry name" value="Pept_M41_FtsH_extracell"/>
</dbReference>
<dbReference type="InterPro" id="IPR000642">
    <property type="entry name" value="Peptidase_M41"/>
</dbReference>
<dbReference type="InterPro" id="IPR037219">
    <property type="entry name" value="Peptidase_M41-like"/>
</dbReference>
<dbReference type="NCBIfam" id="TIGR01241">
    <property type="entry name" value="FtsH_fam"/>
    <property type="match status" value="1"/>
</dbReference>
<dbReference type="PANTHER" id="PTHR23076:SF113">
    <property type="entry name" value="ATP-DEPENDENT ZINC METALLOPROTEASE FTSH 1, CHLOROPLASTIC-RELATED"/>
    <property type="match status" value="1"/>
</dbReference>
<dbReference type="PANTHER" id="PTHR23076">
    <property type="entry name" value="METALLOPROTEASE M41 FTSH"/>
    <property type="match status" value="1"/>
</dbReference>
<dbReference type="Pfam" id="PF00004">
    <property type="entry name" value="AAA"/>
    <property type="match status" value="1"/>
</dbReference>
<dbReference type="Pfam" id="PF17862">
    <property type="entry name" value="AAA_lid_3"/>
    <property type="match status" value="1"/>
</dbReference>
<dbReference type="Pfam" id="PF06480">
    <property type="entry name" value="FtsH_ext"/>
    <property type="match status" value="1"/>
</dbReference>
<dbReference type="Pfam" id="PF01434">
    <property type="entry name" value="Peptidase_M41"/>
    <property type="match status" value="1"/>
</dbReference>
<dbReference type="SMART" id="SM00382">
    <property type="entry name" value="AAA"/>
    <property type="match status" value="1"/>
</dbReference>
<dbReference type="SUPFAM" id="SSF140990">
    <property type="entry name" value="FtsH protease domain-like"/>
    <property type="match status" value="1"/>
</dbReference>
<dbReference type="SUPFAM" id="SSF52540">
    <property type="entry name" value="P-loop containing nucleoside triphosphate hydrolases"/>
    <property type="match status" value="1"/>
</dbReference>
<dbReference type="PROSITE" id="PS00674">
    <property type="entry name" value="AAA"/>
    <property type="match status" value="1"/>
</dbReference>
<accession>A5W382</accession>
<organism>
    <name type="scientific">Pseudomonas putida (strain ATCC 700007 / DSM 6899 / JCM 31910 / BCRC 17059 / LMG 24140 / F1)</name>
    <dbReference type="NCBI Taxonomy" id="351746"/>
    <lineage>
        <taxon>Bacteria</taxon>
        <taxon>Pseudomonadati</taxon>
        <taxon>Pseudomonadota</taxon>
        <taxon>Gammaproteobacteria</taxon>
        <taxon>Pseudomonadales</taxon>
        <taxon>Pseudomonadaceae</taxon>
        <taxon>Pseudomonas</taxon>
    </lineage>
</organism>
<gene>
    <name evidence="1" type="primary">ftsH</name>
    <name type="ordered locus">Pput_2457</name>
</gene>
<keyword id="KW-0067">ATP-binding</keyword>
<keyword id="KW-0997">Cell inner membrane</keyword>
<keyword id="KW-1003">Cell membrane</keyword>
<keyword id="KW-0378">Hydrolase</keyword>
<keyword id="KW-0472">Membrane</keyword>
<keyword id="KW-0479">Metal-binding</keyword>
<keyword id="KW-0482">Metalloprotease</keyword>
<keyword id="KW-0547">Nucleotide-binding</keyword>
<keyword id="KW-0645">Protease</keyword>
<keyword id="KW-0812">Transmembrane</keyword>
<keyword id="KW-1133">Transmembrane helix</keyword>
<keyword id="KW-0862">Zinc</keyword>
<protein>
    <recommendedName>
        <fullName evidence="1">ATP-dependent zinc metalloprotease FtsH</fullName>
        <ecNumber evidence="1">3.4.24.-</ecNumber>
    </recommendedName>
</protein>
<proteinExistence type="inferred from homology"/>